<organism>
    <name type="scientific">Pasteurella multocida (strain Pm70)</name>
    <dbReference type="NCBI Taxonomy" id="272843"/>
    <lineage>
        <taxon>Bacteria</taxon>
        <taxon>Pseudomonadati</taxon>
        <taxon>Pseudomonadota</taxon>
        <taxon>Gammaproteobacteria</taxon>
        <taxon>Pasteurellales</taxon>
        <taxon>Pasteurellaceae</taxon>
        <taxon>Pasteurella</taxon>
    </lineage>
</organism>
<dbReference type="EMBL" id="AE004439">
    <property type="protein sequence ID" value="AAK02814.1"/>
    <property type="molecule type" value="Genomic_DNA"/>
</dbReference>
<dbReference type="RefSeq" id="WP_010906822.1">
    <property type="nucleotide sequence ID" value="NC_002663.1"/>
</dbReference>
<dbReference type="SMR" id="P57868"/>
<dbReference type="STRING" id="272843.PM0730"/>
<dbReference type="EnsemblBacteria" id="AAK02814">
    <property type="protein sequence ID" value="AAK02814"/>
    <property type="gene ID" value="PM0730"/>
</dbReference>
<dbReference type="KEGG" id="pmu:PM0730"/>
<dbReference type="PATRIC" id="fig|272843.6.peg.738"/>
<dbReference type="HOGENOM" id="CLU_087843_4_1_6"/>
<dbReference type="OrthoDB" id="9789556at2"/>
<dbReference type="Proteomes" id="UP000000809">
    <property type="component" value="Chromosome"/>
</dbReference>
<dbReference type="GO" id="GO:0005829">
    <property type="term" value="C:cytosol"/>
    <property type="evidence" value="ECO:0007669"/>
    <property type="project" value="TreeGrafter"/>
</dbReference>
<dbReference type="GO" id="GO:0003723">
    <property type="term" value="F:RNA binding"/>
    <property type="evidence" value="ECO:0007669"/>
    <property type="project" value="UniProtKB-UniRule"/>
</dbReference>
<dbReference type="GO" id="GO:0006353">
    <property type="term" value="P:DNA-templated transcription termination"/>
    <property type="evidence" value="ECO:0007669"/>
    <property type="project" value="UniProtKB-UniRule"/>
</dbReference>
<dbReference type="GO" id="GO:0031564">
    <property type="term" value="P:transcription antitermination"/>
    <property type="evidence" value="ECO:0007669"/>
    <property type="project" value="UniProtKB-KW"/>
</dbReference>
<dbReference type="CDD" id="cd00619">
    <property type="entry name" value="Terminator_NusB"/>
    <property type="match status" value="1"/>
</dbReference>
<dbReference type="FunFam" id="1.10.940.10:FF:000001">
    <property type="entry name" value="Transcription antitermination factor NusB"/>
    <property type="match status" value="1"/>
</dbReference>
<dbReference type="Gene3D" id="1.10.940.10">
    <property type="entry name" value="NusB-like"/>
    <property type="match status" value="1"/>
</dbReference>
<dbReference type="HAMAP" id="MF_00073">
    <property type="entry name" value="NusB"/>
    <property type="match status" value="1"/>
</dbReference>
<dbReference type="InterPro" id="IPR035926">
    <property type="entry name" value="NusB-like_sf"/>
</dbReference>
<dbReference type="InterPro" id="IPR011605">
    <property type="entry name" value="NusB_fam"/>
</dbReference>
<dbReference type="InterPro" id="IPR006027">
    <property type="entry name" value="NusB_RsmB_TIM44"/>
</dbReference>
<dbReference type="NCBIfam" id="TIGR01951">
    <property type="entry name" value="nusB"/>
    <property type="match status" value="1"/>
</dbReference>
<dbReference type="PANTHER" id="PTHR11078:SF3">
    <property type="entry name" value="ANTITERMINATION NUSB DOMAIN-CONTAINING PROTEIN"/>
    <property type="match status" value="1"/>
</dbReference>
<dbReference type="PANTHER" id="PTHR11078">
    <property type="entry name" value="N UTILIZATION SUBSTANCE PROTEIN B-RELATED"/>
    <property type="match status" value="1"/>
</dbReference>
<dbReference type="Pfam" id="PF01029">
    <property type="entry name" value="NusB"/>
    <property type="match status" value="1"/>
</dbReference>
<dbReference type="SUPFAM" id="SSF48013">
    <property type="entry name" value="NusB-like"/>
    <property type="match status" value="1"/>
</dbReference>
<feature type="chain" id="PRO_0000176562" description="Transcription antitermination protein NusB">
    <location>
        <begin position="1"/>
        <end position="144"/>
    </location>
</feature>
<reference key="1">
    <citation type="journal article" date="2001" name="Proc. Natl. Acad. Sci. U.S.A.">
        <title>Complete genomic sequence of Pasteurella multocida Pm70.</title>
        <authorList>
            <person name="May B.J."/>
            <person name="Zhang Q."/>
            <person name="Li L.L."/>
            <person name="Paustian M.L."/>
            <person name="Whittam T.S."/>
            <person name="Kapur V."/>
        </authorList>
    </citation>
    <scope>NUCLEOTIDE SEQUENCE [LARGE SCALE GENOMIC DNA]</scope>
    <source>
        <strain>Pm70</strain>
    </source>
</reference>
<evidence type="ECO:0000255" key="1">
    <source>
        <dbReference type="HAMAP-Rule" id="MF_00073"/>
    </source>
</evidence>
<evidence type="ECO:0000305" key="2"/>
<name>NUSB_PASMU</name>
<accession>P57868</accession>
<proteinExistence type="inferred from homology"/>
<comment type="function">
    <text evidence="1">Involved in transcription antitermination. Required for transcription of ribosomal RNA (rRNA) genes. Binds specifically to the boxA antiterminator sequence of the ribosomal RNA (rrn) operons.</text>
</comment>
<comment type="similarity">
    <text evidence="1 2">Belongs to the NusB family.</text>
</comment>
<sequence>MTEQKHEKKISPRRRARECAVQALYSWYVSQNSPAEIELNFMAEQDLKGVDTAYFRRLFRQTAENVDAVDNIMIPYLDREVSELDPIEKAILRLAVYELKFELDVPYKVVINEAIEVAKVFGAEDSHKYVNGVLDKVAPVLSRK</sequence>
<keyword id="KW-1185">Reference proteome</keyword>
<keyword id="KW-0694">RNA-binding</keyword>
<keyword id="KW-0804">Transcription</keyword>
<keyword id="KW-0889">Transcription antitermination</keyword>
<keyword id="KW-0805">Transcription regulation</keyword>
<gene>
    <name evidence="1" type="primary">nusB</name>
    <name type="ordered locus">PM0730</name>
</gene>
<protein>
    <recommendedName>
        <fullName evidence="1">Transcription antitermination protein NusB</fullName>
    </recommendedName>
    <alternativeName>
        <fullName evidence="1">Antitermination factor NusB</fullName>
    </alternativeName>
</protein>